<evidence type="ECO:0000255" key="1">
    <source>
        <dbReference type="HAMAP-Rule" id="MF_00392"/>
    </source>
</evidence>
<sequence>MTEQRPLTIALVAGETSGDILGAGLIRALKEHVPNARFVGVAGPRMQAEGCEAWYEMEELAVMGIVEVLGRLRRLLHIRADLTKRFGELKPDVFVGIDAPDFNITLEGNLKKQGIKTIHYVSPSVWAWRQKRVFKIGRATDLVLAFLPFEKAFYDKYNVPCRFIGHTMADAMPLDPDKNAARDVLGIPHDAHCLALLPGSRGAEVEMLSADFLKTAQLLRQTYPDLEIVVPLVNAKRREQFERIKAEVAPDLSVHLLDGMGREAMVASDAALLASGTAALECMLAKCPMVVGYRMKPFTFWLAKRLVKTDYVSLPNLLAGRELVKELLQEECEPQKLAAALLPLLANGKTSHAMHDTFRELHQQIRCNADEQAAQAVLELAQ</sequence>
<reference key="1">
    <citation type="journal article" date="2008" name="J. Bacteriol.">
        <title>The complete genome sequence of Escherichia coli DH10B: insights into the biology of a laboratory workhorse.</title>
        <authorList>
            <person name="Durfee T."/>
            <person name="Nelson R."/>
            <person name="Baldwin S."/>
            <person name="Plunkett G. III"/>
            <person name="Burland V."/>
            <person name="Mau B."/>
            <person name="Petrosino J.F."/>
            <person name="Qin X."/>
            <person name="Muzny D.M."/>
            <person name="Ayele M."/>
            <person name="Gibbs R.A."/>
            <person name="Csorgo B."/>
            <person name="Posfai G."/>
            <person name="Weinstock G.M."/>
            <person name="Blattner F.R."/>
        </authorList>
    </citation>
    <scope>NUCLEOTIDE SEQUENCE [LARGE SCALE GENOMIC DNA]</scope>
    <source>
        <strain>K12 / DH10B</strain>
    </source>
</reference>
<organism>
    <name type="scientific">Escherichia coli (strain K12 / DH10B)</name>
    <dbReference type="NCBI Taxonomy" id="316385"/>
    <lineage>
        <taxon>Bacteria</taxon>
        <taxon>Pseudomonadati</taxon>
        <taxon>Pseudomonadota</taxon>
        <taxon>Gammaproteobacteria</taxon>
        <taxon>Enterobacterales</taxon>
        <taxon>Enterobacteriaceae</taxon>
        <taxon>Escherichia</taxon>
    </lineage>
</organism>
<accession>B1XD51</accession>
<name>LPXB_ECODH</name>
<feature type="chain" id="PRO_1000191475" description="Lipid-A-disaccharide synthase">
    <location>
        <begin position="1"/>
        <end position="382"/>
    </location>
</feature>
<proteinExistence type="inferred from homology"/>
<comment type="function">
    <text evidence="1">Condensation of UDP-2,3-diacylglucosamine and 2,3-diacylglucosamine-1-phosphate to form lipid A disaccharide, a precursor of lipid A, a phosphorylated glycolipid that anchors the lipopolysaccharide to the outer membrane of the cell.</text>
</comment>
<comment type="catalytic activity">
    <reaction evidence="1">
        <text>2-N,3-O-bis[(3R)-3-hydroxytetradecanoyl]-alpha-D-glucosaminyl 1-phosphate + UDP-2-N,3-O-bis[(3R)-3-hydroxytetradecanoyl]-alpha-D-glucosamine = lipid A disaccharide (E. coli) + UDP + H(+)</text>
        <dbReference type="Rhea" id="RHEA:22668"/>
        <dbReference type="ChEBI" id="CHEBI:15378"/>
        <dbReference type="ChEBI" id="CHEBI:57957"/>
        <dbReference type="ChEBI" id="CHEBI:58223"/>
        <dbReference type="ChEBI" id="CHEBI:58466"/>
        <dbReference type="ChEBI" id="CHEBI:78847"/>
    </reaction>
</comment>
<comment type="catalytic activity">
    <reaction evidence="1">
        <text>a lipid X + a UDP-2-N,3-O-bis[(3R)-3-hydroxyacyl]-alpha-D-glucosamine = a lipid A disaccharide + UDP + H(+)</text>
        <dbReference type="Rhea" id="RHEA:67828"/>
        <dbReference type="ChEBI" id="CHEBI:15378"/>
        <dbReference type="ChEBI" id="CHEBI:58223"/>
        <dbReference type="ChEBI" id="CHEBI:137748"/>
        <dbReference type="ChEBI" id="CHEBI:176338"/>
        <dbReference type="ChEBI" id="CHEBI:176343"/>
        <dbReference type="EC" id="2.4.1.182"/>
    </reaction>
</comment>
<comment type="pathway">
    <text evidence="1">Glycolipid biosynthesis; lipid IV(A) biosynthesis; lipid IV(A) from (3R)-3-hydroxytetradecanoyl-[acyl-carrier-protein] and UDP-N-acetyl-alpha-D-glucosamine: step 5/6.</text>
</comment>
<comment type="similarity">
    <text evidence="1">Belongs to the LpxB family.</text>
</comment>
<protein>
    <recommendedName>
        <fullName evidence="1">Lipid-A-disaccharide synthase</fullName>
        <ecNumber evidence="1">2.4.1.182</ecNumber>
    </recommendedName>
</protein>
<dbReference type="EC" id="2.4.1.182" evidence="1"/>
<dbReference type="EMBL" id="CP000948">
    <property type="protein sequence ID" value="ACB01360.1"/>
    <property type="molecule type" value="Genomic_DNA"/>
</dbReference>
<dbReference type="RefSeq" id="WP_000139654.1">
    <property type="nucleotide sequence ID" value="NC_010473.1"/>
</dbReference>
<dbReference type="SMR" id="B1XD51"/>
<dbReference type="CAZy" id="GT19">
    <property type="family name" value="Glycosyltransferase Family 19"/>
</dbReference>
<dbReference type="GeneID" id="93777243"/>
<dbReference type="KEGG" id="ecd:ECDH10B_0162"/>
<dbReference type="HOGENOM" id="CLU_036577_3_0_6"/>
<dbReference type="UniPathway" id="UPA00359">
    <property type="reaction ID" value="UER00481"/>
</dbReference>
<dbReference type="GO" id="GO:0016020">
    <property type="term" value="C:membrane"/>
    <property type="evidence" value="ECO:0007669"/>
    <property type="project" value="GOC"/>
</dbReference>
<dbReference type="GO" id="GO:0008915">
    <property type="term" value="F:lipid-A-disaccharide synthase activity"/>
    <property type="evidence" value="ECO:0007669"/>
    <property type="project" value="UniProtKB-UniRule"/>
</dbReference>
<dbReference type="GO" id="GO:0005543">
    <property type="term" value="F:phospholipid binding"/>
    <property type="evidence" value="ECO:0007669"/>
    <property type="project" value="TreeGrafter"/>
</dbReference>
<dbReference type="GO" id="GO:0009245">
    <property type="term" value="P:lipid A biosynthetic process"/>
    <property type="evidence" value="ECO:0007669"/>
    <property type="project" value="UniProtKB-UniRule"/>
</dbReference>
<dbReference type="CDD" id="cd01635">
    <property type="entry name" value="Glycosyltransferase_GTB-type"/>
    <property type="match status" value="1"/>
</dbReference>
<dbReference type="HAMAP" id="MF_00392">
    <property type="entry name" value="LpxB"/>
    <property type="match status" value="1"/>
</dbReference>
<dbReference type="InterPro" id="IPR003835">
    <property type="entry name" value="Glyco_trans_19"/>
</dbReference>
<dbReference type="NCBIfam" id="TIGR00215">
    <property type="entry name" value="lpxB"/>
    <property type="match status" value="1"/>
</dbReference>
<dbReference type="PANTHER" id="PTHR30372">
    <property type="entry name" value="LIPID-A-DISACCHARIDE SYNTHASE"/>
    <property type="match status" value="1"/>
</dbReference>
<dbReference type="PANTHER" id="PTHR30372:SF4">
    <property type="entry name" value="LIPID-A-DISACCHARIDE SYNTHASE, MITOCHONDRIAL-RELATED"/>
    <property type="match status" value="1"/>
</dbReference>
<dbReference type="Pfam" id="PF02684">
    <property type="entry name" value="LpxB"/>
    <property type="match status" value="1"/>
</dbReference>
<dbReference type="SUPFAM" id="SSF53756">
    <property type="entry name" value="UDP-Glycosyltransferase/glycogen phosphorylase"/>
    <property type="match status" value="1"/>
</dbReference>
<gene>
    <name evidence="1" type="primary">lpxB</name>
    <name type="ordered locus">ECDH10B_0162</name>
</gene>
<keyword id="KW-0328">Glycosyltransferase</keyword>
<keyword id="KW-0441">Lipid A biosynthesis</keyword>
<keyword id="KW-0444">Lipid biosynthesis</keyword>
<keyword id="KW-0443">Lipid metabolism</keyword>
<keyword id="KW-0808">Transferase</keyword>